<dbReference type="EMBL" id="X96714">
    <property type="protein sequence ID" value="CAA65475.1"/>
    <property type="molecule type" value="mRNA"/>
</dbReference>
<dbReference type="RefSeq" id="NP_001391900.1">
    <property type="nucleotide sequence ID" value="NM_001404971.1"/>
</dbReference>
<dbReference type="SMR" id="Q43017"/>
<dbReference type="Allergome" id="754">
    <property type="allergen name" value="Pru du 3"/>
</dbReference>
<dbReference type="EnsemblPlants" id="VVA14416">
    <property type="protein sequence ID" value="VVA14416"/>
    <property type="gene ID" value="Prudul26B026190"/>
</dbReference>
<dbReference type="GeneID" id="117630738"/>
<dbReference type="Gramene" id="VVA14416">
    <property type="protein sequence ID" value="VVA14416"/>
    <property type="gene ID" value="Prudul26B026190"/>
</dbReference>
<dbReference type="GO" id="GO:0008289">
    <property type="term" value="F:lipid binding"/>
    <property type="evidence" value="ECO:0007669"/>
    <property type="project" value="UniProtKB-KW"/>
</dbReference>
<dbReference type="GO" id="GO:0006869">
    <property type="term" value="P:lipid transport"/>
    <property type="evidence" value="ECO:0007669"/>
    <property type="project" value="InterPro"/>
</dbReference>
<dbReference type="CDD" id="cd01960">
    <property type="entry name" value="nsLTP1"/>
    <property type="match status" value="1"/>
</dbReference>
<dbReference type="FunFam" id="1.10.110.10:FF:000002">
    <property type="entry name" value="Non-specific lipid-transfer protein"/>
    <property type="match status" value="1"/>
</dbReference>
<dbReference type="Gene3D" id="1.10.110.10">
    <property type="entry name" value="Plant lipid-transfer and hydrophobic proteins"/>
    <property type="match status" value="1"/>
</dbReference>
<dbReference type="InterPro" id="IPR036312">
    <property type="entry name" value="Bifun_inhib/LTP/seed_sf"/>
</dbReference>
<dbReference type="InterPro" id="IPR016140">
    <property type="entry name" value="Bifunc_inhib/LTP/seed_store"/>
</dbReference>
<dbReference type="InterPro" id="IPR000528">
    <property type="entry name" value="Plant_nsLTP"/>
</dbReference>
<dbReference type="PANTHER" id="PTHR33076">
    <property type="entry name" value="NON-SPECIFIC LIPID-TRANSFER PROTEIN 2-RELATED"/>
    <property type="match status" value="1"/>
</dbReference>
<dbReference type="Pfam" id="PF00234">
    <property type="entry name" value="Tryp_alpha_amyl"/>
    <property type="match status" value="1"/>
</dbReference>
<dbReference type="PRINTS" id="PR00382">
    <property type="entry name" value="LIPIDTRNSFER"/>
</dbReference>
<dbReference type="SMART" id="SM00499">
    <property type="entry name" value="AAI"/>
    <property type="match status" value="1"/>
</dbReference>
<dbReference type="SUPFAM" id="SSF47699">
    <property type="entry name" value="Bifunctional inhibitor/lipid-transfer protein/seed storage 2S albumin"/>
    <property type="match status" value="1"/>
</dbReference>
<dbReference type="PROSITE" id="PS00597">
    <property type="entry name" value="PLANT_LTP"/>
    <property type="match status" value="1"/>
</dbReference>
<proteinExistence type="inferred from homology"/>
<reference key="1">
    <citation type="submission" date="1996-05" db="EMBL/GenBank/DDBJ databases">
        <authorList>
            <person name="Esteban M.S."/>
        </authorList>
    </citation>
    <scope>NUCLEOTIDE SEQUENCE [MRNA]</scope>
    <source>
        <strain>cv. Texas</strain>
        <tissue>Flower</tissue>
    </source>
</reference>
<protein>
    <recommendedName>
        <fullName>Non-specific lipid-transfer protein 1</fullName>
        <shortName>LTP 1</shortName>
    </recommendedName>
</protein>
<sequence>MAYSAMTKLALVVALCMVVSVPIAQAITCGQVSSNLAPCIPYVRGGGAVPPACCNGIRNVNNLARTTPDRQAACNCLKQLSASVPGVNPNNAAALPGKCGVNIPYQISPSTNCANVK</sequence>
<accession>Q43017</accession>
<comment type="function">
    <text evidence="1">Plant non-specific lipid-transfer proteins transfer phospholipids as well as galactolipids across membranes. May play a role in wax or cutin deposition in the cell walls of expanding epidermal cells and certain secretory tissues (By similarity).</text>
</comment>
<comment type="similarity">
    <text evidence="3">Belongs to the plant LTP family.</text>
</comment>
<organism>
    <name type="scientific">Prunus dulcis</name>
    <name type="common">Almond</name>
    <name type="synonym">Amygdalus dulcis</name>
    <dbReference type="NCBI Taxonomy" id="3755"/>
    <lineage>
        <taxon>Eukaryota</taxon>
        <taxon>Viridiplantae</taxon>
        <taxon>Streptophyta</taxon>
        <taxon>Embryophyta</taxon>
        <taxon>Tracheophyta</taxon>
        <taxon>Spermatophyta</taxon>
        <taxon>Magnoliopsida</taxon>
        <taxon>eudicotyledons</taxon>
        <taxon>Gunneridae</taxon>
        <taxon>Pentapetalae</taxon>
        <taxon>rosids</taxon>
        <taxon>fabids</taxon>
        <taxon>Rosales</taxon>
        <taxon>Rosaceae</taxon>
        <taxon>Amygdaloideae</taxon>
        <taxon>Amygdaleae</taxon>
        <taxon>Prunus</taxon>
    </lineage>
</organism>
<keyword id="KW-1015">Disulfide bond</keyword>
<keyword id="KW-0446">Lipid-binding</keyword>
<keyword id="KW-0732">Signal</keyword>
<keyword id="KW-0813">Transport</keyword>
<name>NLTP1_PRUDU</name>
<evidence type="ECO:0000250" key="1"/>
<evidence type="ECO:0000255" key="2"/>
<evidence type="ECO:0000305" key="3"/>
<feature type="signal peptide" evidence="2">
    <location>
        <begin position="1"/>
        <end position="26"/>
    </location>
</feature>
<feature type="chain" id="PRO_0000018402" description="Non-specific lipid-transfer protein 1">
    <location>
        <begin position="27"/>
        <end position="117"/>
    </location>
</feature>
<feature type="disulfide bond" evidence="2">
    <location>
        <begin position="29"/>
        <end position="76"/>
    </location>
</feature>
<feature type="disulfide bond" evidence="2">
    <location>
        <begin position="39"/>
        <end position="53"/>
    </location>
</feature>
<feature type="disulfide bond" evidence="2">
    <location>
        <begin position="54"/>
        <end position="99"/>
    </location>
</feature>
<feature type="disulfide bond" evidence="2">
    <location>
        <begin position="74"/>
        <end position="113"/>
    </location>
</feature>